<reference key="1">
    <citation type="journal article" date="2007" name="Photosyn. Res.">
        <title>Complete nucleotide sequence of the freshwater unicellular cyanobacterium Synechococcus elongatus PCC 6301 chromosome: gene content and organization.</title>
        <authorList>
            <person name="Sugita C."/>
            <person name="Ogata K."/>
            <person name="Shikata M."/>
            <person name="Jikuya H."/>
            <person name="Takano J."/>
            <person name="Furumichi M."/>
            <person name="Kanehisa M."/>
            <person name="Omata T."/>
            <person name="Sugiura M."/>
            <person name="Sugita M."/>
        </authorList>
    </citation>
    <scope>NUCLEOTIDE SEQUENCE [LARGE SCALE GENOMIC DNA]</scope>
    <source>
        <strain>ATCC 27144 / PCC 6301 / SAUG 1402/1</strain>
    </source>
</reference>
<sequence>MIITIDALLDAAQLNKIQSSLQTAEFIDGRATAGWHAQLVKQNQQLSRTSTLAKSLQEIVQTALQNNALFEAAAYPQRVHSLLFSRYEPGMEYGRHVDNALMGSGDRRDRADLSFTLFLSDPDRYIGGALVIEGACDEQAYRLPAGSLLLYPSSTLHRVDPVEQGYRFACVGWVQSWIRDPAKRELLFDLDTARRSLFTREGKSIEFDLLSKTYANLLRRWSE</sequence>
<evidence type="ECO:0000255" key="1">
    <source>
        <dbReference type="HAMAP-Rule" id="MF_00657"/>
    </source>
</evidence>
<feature type="chain" id="PRO_0000346526" description="PKHD-type hydroxylase syc1482_d">
    <location>
        <begin position="1"/>
        <end position="223"/>
    </location>
</feature>
<feature type="domain" description="Fe2OG dioxygenase" evidence="1">
    <location>
        <begin position="78"/>
        <end position="176"/>
    </location>
</feature>
<feature type="binding site" evidence="1">
    <location>
        <position position="96"/>
    </location>
    <ligand>
        <name>Fe cation</name>
        <dbReference type="ChEBI" id="CHEBI:24875"/>
    </ligand>
</feature>
<feature type="binding site" evidence="1">
    <location>
        <position position="98"/>
    </location>
    <ligand>
        <name>Fe cation</name>
        <dbReference type="ChEBI" id="CHEBI:24875"/>
    </ligand>
</feature>
<feature type="binding site" evidence="1">
    <location>
        <position position="157"/>
    </location>
    <ligand>
        <name>Fe cation</name>
        <dbReference type="ChEBI" id="CHEBI:24875"/>
    </ligand>
</feature>
<feature type="binding site" evidence="1">
    <location>
        <position position="167"/>
    </location>
    <ligand>
        <name>2-oxoglutarate</name>
        <dbReference type="ChEBI" id="CHEBI:16810"/>
    </ligand>
</feature>
<proteinExistence type="inferred from homology"/>
<name>Y1482_SYNP6</name>
<protein>
    <recommendedName>
        <fullName evidence="1">PKHD-type hydroxylase syc1482_d</fullName>
        <ecNumber evidence="1">1.14.11.-</ecNumber>
    </recommendedName>
</protein>
<dbReference type="EC" id="1.14.11.-" evidence="1"/>
<dbReference type="EMBL" id="AP008231">
    <property type="protein sequence ID" value="BAD79672.1"/>
    <property type="molecule type" value="Genomic_DNA"/>
</dbReference>
<dbReference type="RefSeq" id="WP_011243792.1">
    <property type="nucleotide sequence ID" value="NZ_CP085785.1"/>
</dbReference>
<dbReference type="SMR" id="Q5N1Z8"/>
<dbReference type="KEGG" id="syc:syc1482_d"/>
<dbReference type="eggNOG" id="COG3128">
    <property type="taxonomic scope" value="Bacteria"/>
</dbReference>
<dbReference type="Proteomes" id="UP000001175">
    <property type="component" value="Chromosome"/>
</dbReference>
<dbReference type="GO" id="GO:0016706">
    <property type="term" value="F:2-oxoglutarate-dependent dioxygenase activity"/>
    <property type="evidence" value="ECO:0007669"/>
    <property type="project" value="UniProtKB-UniRule"/>
</dbReference>
<dbReference type="GO" id="GO:0005506">
    <property type="term" value="F:iron ion binding"/>
    <property type="evidence" value="ECO:0007669"/>
    <property type="project" value="UniProtKB-UniRule"/>
</dbReference>
<dbReference type="GO" id="GO:0031418">
    <property type="term" value="F:L-ascorbic acid binding"/>
    <property type="evidence" value="ECO:0007669"/>
    <property type="project" value="UniProtKB-KW"/>
</dbReference>
<dbReference type="GO" id="GO:0006974">
    <property type="term" value="P:DNA damage response"/>
    <property type="evidence" value="ECO:0007669"/>
    <property type="project" value="TreeGrafter"/>
</dbReference>
<dbReference type="GO" id="GO:0006879">
    <property type="term" value="P:intracellular iron ion homeostasis"/>
    <property type="evidence" value="ECO:0007669"/>
    <property type="project" value="TreeGrafter"/>
</dbReference>
<dbReference type="Gene3D" id="2.60.120.620">
    <property type="entry name" value="q2cbj1_9rhob like domain"/>
    <property type="match status" value="1"/>
</dbReference>
<dbReference type="Gene3D" id="4.10.860.20">
    <property type="entry name" value="Rabenosyn, Rab binding domain"/>
    <property type="match status" value="1"/>
</dbReference>
<dbReference type="HAMAP" id="MF_00657">
    <property type="entry name" value="Hydroxyl_YbiX"/>
    <property type="match status" value="1"/>
</dbReference>
<dbReference type="InterPro" id="IPR005123">
    <property type="entry name" value="Oxoglu/Fe-dep_dioxygenase_dom"/>
</dbReference>
<dbReference type="InterPro" id="IPR041097">
    <property type="entry name" value="PKHD_C"/>
</dbReference>
<dbReference type="InterPro" id="IPR023550">
    <property type="entry name" value="PKHD_hydroxylase"/>
</dbReference>
<dbReference type="InterPro" id="IPR006620">
    <property type="entry name" value="Pro_4_hyd_alph"/>
</dbReference>
<dbReference type="InterPro" id="IPR044862">
    <property type="entry name" value="Pro_4_hyd_alph_FE2OG_OXY"/>
</dbReference>
<dbReference type="NCBIfam" id="NF003974">
    <property type="entry name" value="PRK05467.1-3"/>
    <property type="match status" value="1"/>
</dbReference>
<dbReference type="NCBIfam" id="NF003975">
    <property type="entry name" value="PRK05467.1-4"/>
    <property type="match status" value="1"/>
</dbReference>
<dbReference type="PANTHER" id="PTHR41536">
    <property type="entry name" value="PKHD-TYPE HYDROXYLASE YBIX"/>
    <property type="match status" value="1"/>
</dbReference>
<dbReference type="PANTHER" id="PTHR41536:SF1">
    <property type="entry name" value="PKHD-TYPE HYDROXYLASE YBIX"/>
    <property type="match status" value="1"/>
</dbReference>
<dbReference type="Pfam" id="PF13640">
    <property type="entry name" value="2OG-FeII_Oxy_3"/>
    <property type="match status" value="1"/>
</dbReference>
<dbReference type="Pfam" id="PF18331">
    <property type="entry name" value="PKHD_C"/>
    <property type="match status" value="1"/>
</dbReference>
<dbReference type="SMART" id="SM00702">
    <property type="entry name" value="P4Hc"/>
    <property type="match status" value="1"/>
</dbReference>
<dbReference type="PROSITE" id="PS51471">
    <property type="entry name" value="FE2OG_OXY"/>
    <property type="match status" value="1"/>
</dbReference>
<keyword id="KW-0223">Dioxygenase</keyword>
<keyword id="KW-0408">Iron</keyword>
<keyword id="KW-0479">Metal-binding</keyword>
<keyword id="KW-0560">Oxidoreductase</keyword>
<keyword id="KW-0847">Vitamin C</keyword>
<accession>Q5N1Z8</accession>
<gene>
    <name type="ordered locus">syc1482_d</name>
</gene>
<comment type="cofactor">
    <cofactor evidence="1">
        <name>Fe(2+)</name>
        <dbReference type="ChEBI" id="CHEBI:29033"/>
    </cofactor>
    <text evidence="1">Binds 1 Fe(2+) ion per subunit.</text>
</comment>
<comment type="cofactor">
    <cofactor evidence="1">
        <name>L-ascorbate</name>
        <dbReference type="ChEBI" id="CHEBI:38290"/>
    </cofactor>
</comment>
<organism>
    <name type="scientific">Synechococcus sp. (strain ATCC 27144 / PCC 6301 / SAUG 1402/1)</name>
    <name type="common">Anacystis nidulans</name>
    <dbReference type="NCBI Taxonomy" id="269084"/>
    <lineage>
        <taxon>Bacteria</taxon>
        <taxon>Bacillati</taxon>
        <taxon>Cyanobacteriota</taxon>
        <taxon>Cyanophyceae</taxon>
        <taxon>Synechococcales</taxon>
        <taxon>Synechococcaceae</taxon>
        <taxon>Synechococcus</taxon>
    </lineage>
</organism>